<comment type="function">
    <text evidence="2">Antibacterial peptide with amphipathic alpha-helical structure. Shows selective growth inhibitory activity against the Gram-negative bacteria E.coli (MIC=25 uM). Has a weak hemolytic activity against human erythrocytes (LC(50)=200 uM). Is not active against S.aureus (MIC=200 uM).</text>
</comment>
<comment type="subcellular location">
    <subcellularLocation>
        <location evidence="1">Secreted</location>
    </subcellularLocation>
    <subcellularLocation>
        <location evidence="1">Target cell membrane</location>
    </subcellularLocation>
    <text evidence="1">About the first 18 N-terminal residues of the peptide inserts into the lipid bilayer.</text>
</comment>
<comment type="tissue specificity">
    <text evidence="5">Expressed by the skin glands.</text>
</comment>
<comment type="mass spectrometry" mass="2291.4" method="MALDI" evidence="2"/>
<comment type="similarity">
    <text evidence="4">Belongs to the frog skin active peptide (FSAP) family. Alyteserin-1 subfamily.</text>
</comment>
<evidence type="ECO:0000250" key="1">
    <source>
        <dbReference type="UniProtKB" id="H0USY4"/>
    </source>
</evidence>
<evidence type="ECO:0000269" key="2">
    <source>
    </source>
</evidence>
<evidence type="ECO:0000303" key="3">
    <source>
    </source>
</evidence>
<evidence type="ECO:0000305" key="4"/>
<evidence type="ECO:0000305" key="5">
    <source>
    </source>
</evidence>
<name>ATI1B_ALYOB</name>
<accession>P0DQW3</accession>
<keyword id="KW-0027">Amidation</keyword>
<keyword id="KW-0878">Amphibian defense peptide</keyword>
<keyword id="KW-0044">Antibiotic</keyword>
<keyword id="KW-0929">Antimicrobial</keyword>
<keyword id="KW-0903">Direct protein sequencing</keyword>
<keyword id="KW-0391">Immunity</keyword>
<keyword id="KW-0399">Innate immunity</keyword>
<keyword id="KW-0472">Membrane</keyword>
<keyword id="KW-0964">Secreted</keyword>
<keyword id="KW-1052">Target cell membrane</keyword>
<keyword id="KW-1053">Target membrane</keyword>
<dbReference type="GO" id="GO:0005576">
    <property type="term" value="C:extracellular region"/>
    <property type="evidence" value="ECO:0007669"/>
    <property type="project" value="UniProtKB-SubCell"/>
</dbReference>
<dbReference type="GO" id="GO:0016020">
    <property type="term" value="C:membrane"/>
    <property type="evidence" value="ECO:0007669"/>
    <property type="project" value="UniProtKB-KW"/>
</dbReference>
<dbReference type="GO" id="GO:0044218">
    <property type="term" value="C:other organism cell membrane"/>
    <property type="evidence" value="ECO:0007669"/>
    <property type="project" value="UniProtKB-KW"/>
</dbReference>
<dbReference type="GO" id="GO:0042742">
    <property type="term" value="P:defense response to bacterium"/>
    <property type="evidence" value="ECO:0007669"/>
    <property type="project" value="UniProtKB-KW"/>
</dbReference>
<dbReference type="GO" id="GO:0045087">
    <property type="term" value="P:innate immune response"/>
    <property type="evidence" value="ECO:0007669"/>
    <property type="project" value="UniProtKB-KW"/>
</dbReference>
<proteinExistence type="evidence at protein level"/>
<feature type="peptide" id="PRO_0000457131" description="Alyteserin-1b" evidence="2">
    <location>
        <begin position="1"/>
        <end position="23"/>
    </location>
</feature>
<feature type="modified residue" description="Asparagine amide" evidence="2">
    <location>
        <position position="23"/>
    </location>
</feature>
<reference key="1">
    <citation type="journal article" date="2009" name="Peptides">
        <title>The alyteserins: two families of antimicrobial peptides from the skin secretions of the midwife toad Alytes obstetricans (Alytidae).</title>
        <authorList>
            <person name="Conlon J.M."/>
            <person name="Demandt A."/>
            <person name="Nielsen P.F."/>
            <person name="Leprince J."/>
            <person name="Vaudry H."/>
            <person name="Woodhams D.C."/>
        </authorList>
    </citation>
    <scope>PROTEIN SEQUENCE</scope>
    <scope>FUNCTION</scope>
    <scope>SUBCELLULAR LOCATION</scope>
    <scope>AMIDATION AT ASN-23</scope>
    <scope>MASS SPECTROMETRY</scope>
    <source>
        <tissue>Skin secretion</tissue>
    </source>
</reference>
<sequence length="23" mass="2294">GLKEIFKAGLGSLVKGIAAHVAN</sequence>
<organism>
    <name type="scientific">Alytes obstetricans</name>
    <name type="common">Common midwife toad</name>
    <name type="synonym">Bufo obstetricans</name>
    <dbReference type="NCBI Taxonomy" id="8443"/>
    <lineage>
        <taxon>Eukaryota</taxon>
        <taxon>Metazoa</taxon>
        <taxon>Chordata</taxon>
        <taxon>Craniata</taxon>
        <taxon>Vertebrata</taxon>
        <taxon>Euteleostomi</taxon>
        <taxon>Amphibia</taxon>
        <taxon>Batrachia</taxon>
        <taxon>Anura</taxon>
        <taxon>Alytidae</taxon>
        <taxon>Alytinae</taxon>
        <taxon>Alytes</taxon>
    </lineage>
</organism>
<protein>
    <recommendedName>
        <fullName evidence="3">Alyteserin-1b</fullName>
    </recommendedName>
</protein>